<dbReference type="EC" id="4.3.3.-" evidence="3"/>
<dbReference type="EMBL" id="AL445065">
    <property type="protein sequence ID" value="CAC12053.1"/>
    <property type="molecule type" value="Genomic_DNA"/>
</dbReference>
<dbReference type="RefSeq" id="WP_010901333.1">
    <property type="nucleotide sequence ID" value="NC_002578.1"/>
</dbReference>
<dbReference type="SMR" id="Q9HJP3"/>
<dbReference type="STRING" id="273075.gene:9572140"/>
<dbReference type="PaxDb" id="273075-Ta0924"/>
<dbReference type="EnsemblBacteria" id="CAC12053">
    <property type="protein sequence ID" value="CAC12053"/>
    <property type="gene ID" value="CAC12053"/>
</dbReference>
<dbReference type="KEGG" id="tac:Ta0924"/>
<dbReference type="eggNOG" id="arCOG00990">
    <property type="taxonomic scope" value="Archaea"/>
</dbReference>
<dbReference type="HOGENOM" id="CLU_029831_0_0_2"/>
<dbReference type="InParanoid" id="Q9HJP3"/>
<dbReference type="OrthoDB" id="115061at2157"/>
<dbReference type="BRENDA" id="2.6.1.97">
    <property type="organism ID" value="6324"/>
</dbReference>
<dbReference type="UniPathway" id="UPA00393"/>
<dbReference type="Proteomes" id="UP000001024">
    <property type="component" value="Chromosome"/>
</dbReference>
<dbReference type="GO" id="GO:0016829">
    <property type="term" value="F:lyase activity"/>
    <property type="evidence" value="ECO:0007669"/>
    <property type="project" value="UniProtKB-KW"/>
</dbReference>
<dbReference type="GO" id="GO:0003723">
    <property type="term" value="F:RNA binding"/>
    <property type="evidence" value="ECO:0007669"/>
    <property type="project" value="InterPro"/>
</dbReference>
<dbReference type="GO" id="GO:0006400">
    <property type="term" value="P:tRNA modification"/>
    <property type="evidence" value="ECO:0007669"/>
    <property type="project" value="InterPro"/>
</dbReference>
<dbReference type="Gene3D" id="2.30.130.10">
    <property type="entry name" value="PUA domain"/>
    <property type="match status" value="1"/>
</dbReference>
<dbReference type="Gene3D" id="3.20.20.105">
    <property type="entry name" value="Queuine tRNA-ribosyltransferase-like"/>
    <property type="match status" value="1"/>
</dbReference>
<dbReference type="Gene3D" id="3.40.50.10630">
    <property type="entry name" value="Uracil-DNA glycosylase-like"/>
    <property type="match status" value="1"/>
</dbReference>
<dbReference type="InterPro" id="IPR040777">
    <property type="entry name" value="DUF5591"/>
</dbReference>
<dbReference type="InterPro" id="IPR002478">
    <property type="entry name" value="PUA"/>
</dbReference>
<dbReference type="InterPro" id="IPR015947">
    <property type="entry name" value="PUA-like_sf"/>
</dbReference>
<dbReference type="InterPro" id="IPR036974">
    <property type="entry name" value="PUA_sf"/>
</dbReference>
<dbReference type="InterPro" id="IPR036511">
    <property type="entry name" value="TGT-like_sf"/>
</dbReference>
<dbReference type="InterPro" id="IPR036895">
    <property type="entry name" value="Uracil-DNA_glycosylase-like_sf"/>
</dbReference>
<dbReference type="Pfam" id="PF17884">
    <property type="entry name" value="DUF5591"/>
    <property type="match status" value="1"/>
</dbReference>
<dbReference type="Pfam" id="PF01472">
    <property type="entry name" value="PUA"/>
    <property type="match status" value="1"/>
</dbReference>
<dbReference type="SUPFAM" id="SSF88802">
    <property type="entry name" value="Pre-PUA domain"/>
    <property type="match status" value="1"/>
</dbReference>
<dbReference type="SUPFAM" id="SSF88697">
    <property type="entry name" value="PUA domain-like"/>
    <property type="match status" value="1"/>
</dbReference>
<dbReference type="SUPFAM" id="SSF51713">
    <property type="entry name" value="tRNA-guanine transglycosylase"/>
    <property type="match status" value="1"/>
</dbReference>
<dbReference type="SUPFAM" id="SSF52141">
    <property type="entry name" value="Uracil-DNA glycosylase-like"/>
    <property type="match status" value="1"/>
</dbReference>
<dbReference type="PROSITE" id="PS50890">
    <property type="entry name" value="PUA"/>
    <property type="match status" value="1"/>
</dbReference>
<protein>
    <recommendedName>
        <fullName evidence="4">Archaeosine synthase subunit alpha</fullName>
        <ecNumber evidence="3">4.3.3.-</ecNumber>
    </recommendedName>
    <alternativeName>
        <fullName evidence="4">Archaeosine synthase, lysine transferase subunit</fullName>
    </alternativeName>
</protein>
<reference key="1">
    <citation type="journal article" date="2000" name="Nature">
        <title>The genome sequence of the thermoacidophilic scavenger Thermoplasma acidophilum.</title>
        <authorList>
            <person name="Ruepp A."/>
            <person name="Graml W."/>
            <person name="Santos-Martinez M.-L."/>
            <person name="Koretke K.K."/>
            <person name="Volker C."/>
            <person name="Mewes H.-W."/>
            <person name="Frishman D."/>
            <person name="Stocker S."/>
            <person name="Lupas A.N."/>
            <person name="Baumeister W."/>
        </authorList>
    </citation>
    <scope>NUCLEOTIDE SEQUENCE [LARGE SCALE GENOMIC DNA]</scope>
    <source>
        <strain>ATCC 25905 / DSM 1728 / JCM 9062 / NBRC 15155 / AMRC-C165</strain>
    </source>
</reference>
<reference key="2">
    <citation type="journal article" date="2019" name="Nat. Chem. Biol.">
        <title>Identification of a radical SAM enzyme involved in the synthesis of archaeosine.</title>
        <authorList>
            <person name="Yokogawa T."/>
            <person name="Nomura Y."/>
            <person name="Yasuda A."/>
            <person name="Ogino H."/>
            <person name="Hiura K."/>
            <person name="Nakada S."/>
            <person name="Oka N."/>
            <person name="Ando K."/>
            <person name="Kawamura T."/>
            <person name="Hirata A."/>
            <person name="Hori H."/>
            <person name="Ohno S."/>
        </authorList>
    </citation>
    <scope>FUNCTION</scope>
    <scope>CATALYTIC ACTIVITY</scope>
    <scope>PATHWAY</scope>
</reference>
<proteinExistence type="evidence at protein level"/>
<evidence type="ECO:0000250" key="1">
    <source>
        <dbReference type="UniProtKB" id="Q5JHG7"/>
    </source>
</evidence>
<evidence type="ECO:0000255" key="2">
    <source>
        <dbReference type="PROSITE-ProRule" id="PRU00161"/>
    </source>
</evidence>
<evidence type="ECO:0000269" key="3">
    <source>
    </source>
</evidence>
<evidence type="ECO:0000303" key="4">
    <source>
    </source>
</evidence>
<evidence type="ECO:0000305" key="5"/>
<evidence type="ECO:0000305" key="6">
    <source>
    </source>
</evidence>
<evidence type="ECO:0000312" key="7">
    <source>
        <dbReference type="EMBL" id="CAC12053.1"/>
    </source>
</evidence>
<comment type="function">
    <text evidence="3">Functions in the biosynthesis of archaeosine, a modified nucleoside present in the dihydrouridine loop (D-loop) of archaeal tRNAs. Catalyzes the addition of L-lysine to the cyano group of 7-cyano-7-deazaguanine (preQ0)-modified tRNAs at position 15, to generate q0kN15-tRNA, a q0N lysine adduct identified as 7-N-[(5S)-5-amino-5-carboxypentyl]formamidino-7-deazaguanosine.</text>
</comment>
<comment type="catalytic activity">
    <reaction evidence="3">
        <text>7-cyano-7-carbaguanosine(15) in tRNA + L-lysine = 7-N-[(5S)-5-amino-5-carboxypentyl]formamidino-7-deazaguanosine(15) in tRNA</text>
        <dbReference type="Rhea" id="RHEA:63216"/>
        <dbReference type="Rhea" id="RHEA-COMP:10371"/>
        <dbReference type="Rhea" id="RHEA-COMP:16288"/>
        <dbReference type="ChEBI" id="CHEBI:32551"/>
        <dbReference type="ChEBI" id="CHEBI:82850"/>
        <dbReference type="ChEBI" id="CHEBI:145542"/>
    </reaction>
    <physiologicalReaction direction="left-to-right" evidence="6">
        <dbReference type="Rhea" id="RHEA:63217"/>
    </physiologicalReaction>
</comment>
<comment type="pathway">
    <text evidence="3">tRNA modification; archaeosine-tRNA biosynthesis.</text>
</comment>
<comment type="subunit">
    <text evidence="1">Forms a robust complex with the archaeosine synthase beta subunit RaSEA, likely an alpha(2)beta(2) heterotetrameric structure. Formation of this complex highly increases lysine transfer activity.</text>
</comment>
<comment type="similarity">
    <text evidence="5">Belongs to the archaeosine synthase type 1 family.</text>
</comment>
<gene>
    <name evidence="4" type="primary">arcS</name>
    <name evidence="7" type="ordered locus">Ta0924</name>
</gene>
<sequence length="510" mass="58243">MIEDQALFGYARYGKVDDVVYPSVIASGNGINYGDSDIEILGDRIPRQILYPAKIKQEILETDKLVIIPNGAELVRKPKDLVRIIMDIHSRYGFSKLIMISGISDPYSIPALVYLGISFFDSSILEMEGKMGYRFTPFGIEKADHDVSSENAIFISDMMHIIQRSISDGTLRELIEKAVISSKAAEMVRIADYSYYQDFESVFPVRTPYIKANTIEDLYRPDLIRYRNYISESYVKPDADIALILPCSAKKPYSRSKSHQKVIGALGNLRRFIHEVIVTSPIGIVPRDLEETYPARFYDIPVIGLWYEDEKIMMKRMMSSYMGRNRYRKVIAFIPEDLDFITEAIPYPHEVIEFKSSNLQRLREVIQREIAGGKAVNQKVAKYNSILRYQFGEWILPLVSGYTIRRNYNQDMIVKDGKILFVYNENLGKFTINKASADMFIKNGKFLVEIDDFKPTSNVYAMGVVDATEDIRQEDEVVLVHSGEVRGVGIAKMPARAMIELKKGIAVKVR</sequence>
<keyword id="KW-0456">Lyase</keyword>
<keyword id="KW-1185">Reference proteome</keyword>
<keyword id="KW-0819">tRNA processing</keyword>
<feature type="chain" id="PRO_0000450070" description="Archaeosine synthase subunit alpha">
    <location>
        <begin position="1"/>
        <end position="510"/>
    </location>
</feature>
<feature type="domain" description="PUA" evidence="2">
    <location>
        <begin position="427"/>
        <end position="510"/>
    </location>
</feature>
<organism>
    <name type="scientific">Thermoplasma acidophilum (strain ATCC 25905 / DSM 1728 / JCM 9062 / NBRC 15155 / AMRC-C165)</name>
    <dbReference type="NCBI Taxonomy" id="273075"/>
    <lineage>
        <taxon>Archaea</taxon>
        <taxon>Methanobacteriati</taxon>
        <taxon>Thermoplasmatota</taxon>
        <taxon>Thermoplasmata</taxon>
        <taxon>Thermoplasmatales</taxon>
        <taxon>Thermoplasmataceae</taxon>
        <taxon>Thermoplasma</taxon>
    </lineage>
</organism>
<name>ARCSA_THEAC</name>
<accession>Q9HJP3</accession>